<organism>
    <name type="scientific">Burkholderia pseudomallei (strain 668)</name>
    <dbReference type="NCBI Taxonomy" id="320373"/>
    <lineage>
        <taxon>Bacteria</taxon>
        <taxon>Pseudomonadati</taxon>
        <taxon>Pseudomonadota</taxon>
        <taxon>Betaproteobacteria</taxon>
        <taxon>Burkholderiales</taxon>
        <taxon>Burkholderiaceae</taxon>
        <taxon>Burkholderia</taxon>
        <taxon>pseudomallei group</taxon>
    </lineage>
</organism>
<accession>A3N5B0</accession>
<evidence type="ECO:0000255" key="1">
    <source>
        <dbReference type="HAMAP-Rule" id="MF_01039"/>
    </source>
</evidence>
<reference key="1">
    <citation type="journal article" date="2010" name="Genome Biol. Evol.">
        <title>Continuing evolution of Burkholderia mallei through genome reduction and large-scale rearrangements.</title>
        <authorList>
            <person name="Losada L."/>
            <person name="Ronning C.M."/>
            <person name="DeShazer D."/>
            <person name="Woods D."/>
            <person name="Fedorova N."/>
            <person name="Kim H.S."/>
            <person name="Shabalina S.A."/>
            <person name="Pearson T.R."/>
            <person name="Brinkac L."/>
            <person name="Tan P."/>
            <person name="Nandi T."/>
            <person name="Crabtree J."/>
            <person name="Badger J."/>
            <person name="Beckstrom-Sternberg S."/>
            <person name="Saqib M."/>
            <person name="Schutzer S.E."/>
            <person name="Keim P."/>
            <person name="Nierman W.C."/>
        </authorList>
    </citation>
    <scope>NUCLEOTIDE SEQUENCE [LARGE SCALE GENOMIC DNA]</scope>
    <source>
        <strain>668</strain>
    </source>
</reference>
<proteinExistence type="inferred from homology"/>
<gene>
    <name evidence="1" type="primary">gpmA</name>
    <name type="ordered locus">BURPS668_0478</name>
</gene>
<comment type="function">
    <text evidence="1">Catalyzes the interconversion of 2-phosphoglycerate and 3-phosphoglycerate.</text>
</comment>
<comment type="catalytic activity">
    <reaction evidence="1">
        <text>(2R)-2-phosphoglycerate = (2R)-3-phosphoglycerate</text>
        <dbReference type="Rhea" id="RHEA:15901"/>
        <dbReference type="ChEBI" id="CHEBI:58272"/>
        <dbReference type="ChEBI" id="CHEBI:58289"/>
        <dbReference type="EC" id="5.4.2.11"/>
    </reaction>
</comment>
<comment type="pathway">
    <text evidence="1">Carbohydrate degradation; glycolysis; pyruvate from D-glyceraldehyde 3-phosphate: step 3/5.</text>
</comment>
<comment type="subunit">
    <text evidence="1">Homodimer.</text>
</comment>
<comment type="similarity">
    <text evidence="1">Belongs to the phosphoglycerate mutase family. BPG-dependent PGAM subfamily.</text>
</comment>
<keyword id="KW-0312">Gluconeogenesis</keyword>
<keyword id="KW-0324">Glycolysis</keyword>
<keyword id="KW-0413">Isomerase</keyword>
<sequence length="249" mass="27893">MYKLVLIRHGESTWNKENRFTGWVDVDLTEQGNREARQAGQLLKEAGYTFDIAYTSVLKRAIRTLWHVQDQMDLMYVPVVHSWRLNERHYGALSGLNKAETAAKYGDEQVLVWRRSYDTPPPALEPGDERAPYADPRYAKVPREQLPLTECLKDTVARVLPLWNESIAPAVKAGKQVLIAAHGNSLRALIKYLDGISDADIVGLNIPNGVPLVYELDESLTPIRHYYLGDQEAIAKAQAAVAQQGKSAA</sequence>
<feature type="chain" id="PRO_1000064043" description="2,3-bisphosphoglycerate-dependent phosphoglycerate mutase">
    <location>
        <begin position="1"/>
        <end position="249"/>
    </location>
</feature>
<feature type="active site" description="Tele-phosphohistidine intermediate" evidence="1">
    <location>
        <position position="9"/>
    </location>
</feature>
<feature type="active site" description="Proton donor/acceptor" evidence="1">
    <location>
        <position position="87"/>
    </location>
</feature>
<feature type="binding site" evidence="1">
    <location>
        <begin position="8"/>
        <end position="15"/>
    </location>
    <ligand>
        <name>substrate</name>
    </ligand>
</feature>
<feature type="binding site" evidence="1">
    <location>
        <begin position="21"/>
        <end position="22"/>
    </location>
    <ligand>
        <name>substrate</name>
    </ligand>
</feature>
<feature type="binding site" evidence="1">
    <location>
        <position position="60"/>
    </location>
    <ligand>
        <name>substrate</name>
    </ligand>
</feature>
<feature type="binding site" evidence="1">
    <location>
        <begin position="87"/>
        <end position="90"/>
    </location>
    <ligand>
        <name>substrate</name>
    </ligand>
</feature>
<feature type="binding site" evidence="1">
    <location>
        <position position="98"/>
    </location>
    <ligand>
        <name>substrate</name>
    </ligand>
</feature>
<feature type="binding site" evidence="1">
    <location>
        <begin position="114"/>
        <end position="115"/>
    </location>
    <ligand>
        <name>substrate</name>
    </ligand>
</feature>
<feature type="binding site" evidence="1">
    <location>
        <begin position="183"/>
        <end position="184"/>
    </location>
    <ligand>
        <name>substrate</name>
    </ligand>
</feature>
<feature type="site" description="Transition state stabilizer" evidence="1">
    <location>
        <position position="182"/>
    </location>
</feature>
<protein>
    <recommendedName>
        <fullName evidence="1">2,3-bisphosphoglycerate-dependent phosphoglycerate mutase</fullName>
        <shortName evidence="1">BPG-dependent PGAM</shortName>
        <shortName evidence="1">PGAM</shortName>
        <shortName evidence="1">Phosphoglyceromutase</shortName>
        <shortName evidence="1">dPGM</shortName>
        <ecNumber evidence="1">5.4.2.11</ecNumber>
    </recommendedName>
</protein>
<name>GPMA_BURP6</name>
<dbReference type="EC" id="5.4.2.11" evidence="1"/>
<dbReference type="EMBL" id="CP000570">
    <property type="protein sequence ID" value="ABN82812.1"/>
    <property type="molecule type" value="Genomic_DNA"/>
</dbReference>
<dbReference type="RefSeq" id="WP_004198007.1">
    <property type="nucleotide sequence ID" value="NC_009074.1"/>
</dbReference>
<dbReference type="SMR" id="A3N5B0"/>
<dbReference type="GeneID" id="93058961"/>
<dbReference type="KEGG" id="bpd:BURPS668_0478"/>
<dbReference type="HOGENOM" id="CLU_033323_1_1_4"/>
<dbReference type="UniPathway" id="UPA00109">
    <property type="reaction ID" value="UER00186"/>
</dbReference>
<dbReference type="GO" id="GO:0004619">
    <property type="term" value="F:phosphoglycerate mutase activity"/>
    <property type="evidence" value="ECO:0007669"/>
    <property type="project" value="UniProtKB-EC"/>
</dbReference>
<dbReference type="GO" id="GO:0006094">
    <property type="term" value="P:gluconeogenesis"/>
    <property type="evidence" value="ECO:0007669"/>
    <property type="project" value="UniProtKB-UniRule"/>
</dbReference>
<dbReference type="GO" id="GO:0006096">
    <property type="term" value="P:glycolytic process"/>
    <property type="evidence" value="ECO:0007669"/>
    <property type="project" value="UniProtKB-UniRule"/>
</dbReference>
<dbReference type="CDD" id="cd07067">
    <property type="entry name" value="HP_PGM_like"/>
    <property type="match status" value="1"/>
</dbReference>
<dbReference type="FunFam" id="3.40.50.1240:FF:000003">
    <property type="entry name" value="2,3-bisphosphoglycerate-dependent phosphoglycerate mutase"/>
    <property type="match status" value="1"/>
</dbReference>
<dbReference type="Gene3D" id="3.40.50.1240">
    <property type="entry name" value="Phosphoglycerate mutase-like"/>
    <property type="match status" value="1"/>
</dbReference>
<dbReference type="HAMAP" id="MF_01039">
    <property type="entry name" value="PGAM_GpmA"/>
    <property type="match status" value="1"/>
</dbReference>
<dbReference type="InterPro" id="IPR013078">
    <property type="entry name" value="His_Pase_superF_clade-1"/>
</dbReference>
<dbReference type="InterPro" id="IPR029033">
    <property type="entry name" value="His_PPase_superfam"/>
</dbReference>
<dbReference type="InterPro" id="IPR001345">
    <property type="entry name" value="PG/BPGM_mutase_AS"/>
</dbReference>
<dbReference type="InterPro" id="IPR005952">
    <property type="entry name" value="Phosphogly_mut1"/>
</dbReference>
<dbReference type="NCBIfam" id="TIGR01258">
    <property type="entry name" value="pgm_1"/>
    <property type="match status" value="1"/>
</dbReference>
<dbReference type="NCBIfam" id="NF010713">
    <property type="entry name" value="PRK14115.1"/>
    <property type="match status" value="1"/>
</dbReference>
<dbReference type="PANTHER" id="PTHR11931">
    <property type="entry name" value="PHOSPHOGLYCERATE MUTASE"/>
    <property type="match status" value="1"/>
</dbReference>
<dbReference type="Pfam" id="PF00300">
    <property type="entry name" value="His_Phos_1"/>
    <property type="match status" value="2"/>
</dbReference>
<dbReference type="PIRSF" id="PIRSF000709">
    <property type="entry name" value="6PFK_2-Ptase"/>
    <property type="match status" value="1"/>
</dbReference>
<dbReference type="SMART" id="SM00855">
    <property type="entry name" value="PGAM"/>
    <property type="match status" value="1"/>
</dbReference>
<dbReference type="SUPFAM" id="SSF53254">
    <property type="entry name" value="Phosphoglycerate mutase-like"/>
    <property type="match status" value="1"/>
</dbReference>
<dbReference type="PROSITE" id="PS00175">
    <property type="entry name" value="PG_MUTASE"/>
    <property type="match status" value="1"/>
</dbReference>